<sequence>MSTTSLQPFAPSFSPFPSTQSLGMAPSQTIGLDTLAEGSQYSLEQLQLSREAGNDAATATSSTSLRSSSFSKSTDQSVSNPSGNHHSNNGPPSDFKSSQRDPLAEARSAIRKNSTSAPVRRRISRACDQCNQLRTKCDGQHPCAHCIEFGLTCEYARERKKRGKASKKDLAAAAAAAAAAGSTSSSTANDGGPMLTKGHSPSDGRSSHEINGRYDPAFDAARTLTNSAQSQLQSHADVPGMVGMQNSQQPHSQPPLGAALDALHLNHFSALNESNRPQMSVPDLRTLQMLHPSGTNPRSPSAVLPSQGLNSYNETAYSLMNPQESNPASMNHFRLGSSAENQPPSFLGLSPPAQSPGWLPLPSPSPANFPSFSMNPYPSTLRYPVLQPVLPHIASIIPQSLACDLLDVYFTSFSPSHLSPLSPYVVAYIFRKQSFLHPTKPRVCSPGLLASMLWVAAQTSDAAFLTSPPSARGRVCQKLLELTIGLLRPLIHGPAPGETSPNYAANMVINGVALGGFGVSMDQLGAQSTATGAVDDVATYVHLATVVSASEYKAASIRWWTAAWSLARELKLGRELPPNTNTARQDGDRDADSDVDMSKRNLPSLVTSVGHGSGTPLNVTEEEREERRRLWWLLYATDRHLALCYNQPLRLLDKECEGLLQPMNDDLWQAGDFGAVGYRQVGPPIECSGHSMFGYFLPLMTILGGIVDLQQAKEHPRFGIAFRNSSEWEHQVLELTRQLETYGQSLKEFESRYTSSLALGAADNETIVDGGHLDHVSPSGRSSSTVGSRINESIVHTKMVVAYGTHIMHVLHILLAGKWDPINLLEDQDLWISSESFITAMGHAVGAADAAADILEYDPDLSFMPFFFGIYLLQGSFLLLLAADKLQGDASPSVVRACETIVRAHEACVVTLNTEYQTFRKVMRSALAQVRGRMPEDFGEQQQRRREVLALYRWTGDGSGLAL</sequence>
<evidence type="ECO:0000250" key="1"/>
<evidence type="ECO:0000255" key="2">
    <source>
        <dbReference type="PROSITE-ProRule" id="PRU00227"/>
    </source>
</evidence>
<evidence type="ECO:0000256" key="3">
    <source>
        <dbReference type="SAM" id="MobiDB-lite"/>
    </source>
</evidence>
<evidence type="ECO:0000305" key="4"/>
<keyword id="KW-0010">Activator</keyword>
<keyword id="KW-0238">DNA-binding</keyword>
<keyword id="KW-0479">Metal-binding</keyword>
<keyword id="KW-0539">Nucleus</keyword>
<keyword id="KW-1185">Reference proteome</keyword>
<keyword id="KW-0804">Transcription</keyword>
<keyword id="KW-0805">Transcription regulation</keyword>
<keyword id="KW-0862">Zinc</keyword>
<dbReference type="EMBL" id="CH476596">
    <property type="protein sequence ID" value="EAU37394.1"/>
    <property type="status" value="ALT_SEQ"/>
    <property type="molecule type" value="Genomic_DNA"/>
</dbReference>
<dbReference type="RefSeq" id="XP_001211610.1">
    <property type="nucleotide sequence ID" value="XM_001211610.1"/>
</dbReference>
<dbReference type="SMR" id="Q0CV52"/>
<dbReference type="STRING" id="341663.Q0CV52"/>
<dbReference type="GeneID" id="4316904"/>
<dbReference type="eggNOG" id="ENOG502QUI0">
    <property type="taxonomic scope" value="Eukaryota"/>
</dbReference>
<dbReference type="OrthoDB" id="5365785at2759"/>
<dbReference type="Proteomes" id="UP000007963">
    <property type="component" value="Unassembled WGS sequence"/>
</dbReference>
<dbReference type="GO" id="GO:0005634">
    <property type="term" value="C:nucleus"/>
    <property type="evidence" value="ECO:0007669"/>
    <property type="project" value="UniProtKB-SubCell"/>
</dbReference>
<dbReference type="GO" id="GO:0003677">
    <property type="term" value="F:DNA binding"/>
    <property type="evidence" value="ECO:0007669"/>
    <property type="project" value="UniProtKB-KW"/>
</dbReference>
<dbReference type="GO" id="GO:0000981">
    <property type="term" value="F:DNA-binding transcription factor activity, RNA polymerase II-specific"/>
    <property type="evidence" value="ECO:0007669"/>
    <property type="project" value="InterPro"/>
</dbReference>
<dbReference type="GO" id="GO:0008270">
    <property type="term" value="F:zinc ion binding"/>
    <property type="evidence" value="ECO:0007669"/>
    <property type="project" value="InterPro"/>
</dbReference>
<dbReference type="GO" id="GO:0006351">
    <property type="term" value="P:DNA-templated transcription"/>
    <property type="evidence" value="ECO:0007669"/>
    <property type="project" value="InterPro"/>
</dbReference>
<dbReference type="GO" id="GO:0045893">
    <property type="term" value="P:positive regulation of DNA-templated transcription"/>
    <property type="evidence" value="ECO:0000250"/>
    <property type="project" value="UniProtKB"/>
</dbReference>
<dbReference type="GO" id="GO:0045493">
    <property type="term" value="P:xylan catabolic process"/>
    <property type="evidence" value="ECO:0000250"/>
    <property type="project" value="UniProtKB"/>
</dbReference>
<dbReference type="CDD" id="cd12148">
    <property type="entry name" value="fungal_TF_MHR"/>
    <property type="match status" value="1"/>
</dbReference>
<dbReference type="CDD" id="cd00067">
    <property type="entry name" value="GAL4"/>
    <property type="match status" value="1"/>
</dbReference>
<dbReference type="FunFam" id="4.10.240.10:FF:000004">
    <property type="entry name" value="Xylanolytic transcriptional activator XlnR"/>
    <property type="match status" value="1"/>
</dbReference>
<dbReference type="Gene3D" id="4.10.240.10">
    <property type="entry name" value="Zn(2)-C6 fungal-type DNA-binding domain"/>
    <property type="match status" value="1"/>
</dbReference>
<dbReference type="InterPro" id="IPR007219">
    <property type="entry name" value="Transcription_factor_dom_fun"/>
</dbReference>
<dbReference type="InterPro" id="IPR051439">
    <property type="entry name" value="XlnR/Xlr1"/>
</dbReference>
<dbReference type="InterPro" id="IPR036864">
    <property type="entry name" value="Zn2-C6_fun-type_DNA-bd_sf"/>
</dbReference>
<dbReference type="InterPro" id="IPR001138">
    <property type="entry name" value="Zn2Cys6_DnaBD"/>
</dbReference>
<dbReference type="PANTHER" id="PTHR47663">
    <property type="entry name" value="XYLANOLYTIC TRANSCRIPTIONAL ACTIVATOR XLNR-RELATED"/>
    <property type="match status" value="1"/>
</dbReference>
<dbReference type="PANTHER" id="PTHR47663:SF1">
    <property type="entry name" value="XYLANOLYTIC TRANSCRIPTIONAL ACTIVATOR XLNR-RELATED"/>
    <property type="match status" value="1"/>
</dbReference>
<dbReference type="Pfam" id="PF04082">
    <property type="entry name" value="Fungal_trans"/>
    <property type="match status" value="1"/>
</dbReference>
<dbReference type="Pfam" id="PF00172">
    <property type="entry name" value="Zn_clus"/>
    <property type="match status" value="1"/>
</dbReference>
<dbReference type="SMART" id="SM00906">
    <property type="entry name" value="Fungal_trans"/>
    <property type="match status" value="1"/>
</dbReference>
<dbReference type="SMART" id="SM00066">
    <property type="entry name" value="GAL4"/>
    <property type="match status" value="1"/>
</dbReference>
<dbReference type="SUPFAM" id="SSF57701">
    <property type="entry name" value="Zn2/Cys6 DNA-binding domain"/>
    <property type="match status" value="1"/>
</dbReference>
<dbReference type="PROSITE" id="PS50048">
    <property type="entry name" value="ZN2_CY6_FUNGAL_2"/>
    <property type="match status" value="1"/>
</dbReference>
<proteinExistence type="inferred from homology"/>
<comment type="function">
    <text evidence="1">Transcriptional activator of the xylanolytic system. Involved in the regulation of extracellular cellulolytic and xylanolytic genes and in the regulation of the intracellular activities of D-xylose catabolic genes in the pentose catabolic pathway (PCP) in response to the presence of D-xylose (By similarity).</text>
</comment>
<comment type="subcellular location">
    <subcellularLocation>
        <location evidence="2">Nucleus</location>
    </subcellularLocation>
</comment>
<comment type="similarity">
    <text evidence="4">Belongs to the xlnR/xlr1 family.</text>
</comment>
<comment type="sequence caution" evidence="4">
    <conflict type="erroneous gene model prediction">
        <sequence resource="EMBL-CDS" id="EAU37394"/>
    </conflict>
</comment>
<comment type="sequence caution" evidence="4">
    <conflict type="erroneous initiation">
        <sequence resource="EMBL-CDS" id="EAU37394"/>
    </conflict>
    <text>Truncated N-terminus.</text>
</comment>
<accession>Q0CV52</accession>
<reference key="1">
    <citation type="submission" date="2005-09" db="EMBL/GenBank/DDBJ databases">
        <title>Annotation of the Aspergillus terreus NIH2624 genome.</title>
        <authorList>
            <person name="Birren B.W."/>
            <person name="Lander E.S."/>
            <person name="Galagan J.E."/>
            <person name="Nusbaum C."/>
            <person name="Devon K."/>
            <person name="Henn M."/>
            <person name="Ma L.-J."/>
            <person name="Jaffe D.B."/>
            <person name="Butler J."/>
            <person name="Alvarez P."/>
            <person name="Gnerre S."/>
            <person name="Grabherr M."/>
            <person name="Kleber M."/>
            <person name="Mauceli E.W."/>
            <person name="Brockman W."/>
            <person name="Rounsley S."/>
            <person name="Young S.K."/>
            <person name="LaButti K."/>
            <person name="Pushparaj V."/>
            <person name="DeCaprio D."/>
            <person name="Crawford M."/>
            <person name="Koehrsen M."/>
            <person name="Engels R."/>
            <person name="Montgomery P."/>
            <person name="Pearson M."/>
            <person name="Howarth C."/>
            <person name="Larson L."/>
            <person name="Luoma S."/>
            <person name="White J."/>
            <person name="Alvarado L."/>
            <person name="Kodira C.D."/>
            <person name="Zeng Q."/>
            <person name="Oleary S."/>
            <person name="Yandava C."/>
            <person name="Denning D.W."/>
            <person name="Nierman W.C."/>
            <person name="Milne T."/>
            <person name="Madden K."/>
        </authorList>
    </citation>
    <scope>NUCLEOTIDE SEQUENCE [LARGE SCALE GENOMIC DNA]</scope>
    <source>
        <strain>NIH 2624 / FGSC A1156</strain>
    </source>
</reference>
<feature type="chain" id="PRO_0000393155" description="Xylanolytic transcriptional activator xlnR">
    <location>
        <begin position="1"/>
        <end position="963"/>
    </location>
</feature>
<feature type="DNA-binding region" description="Zn(2)-C6 fungal-type" evidence="2">
    <location>
        <begin position="127"/>
        <end position="153"/>
    </location>
</feature>
<feature type="region of interest" description="Disordered" evidence="3">
    <location>
        <begin position="1"/>
        <end position="30"/>
    </location>
</feature>
<feature type="region of interest" description="Disordered" evidence="3">
    <location>
        <begin position="46"/>
        <end position="121"/>
    </location>
</feature>
<feature type="region of interest" description="Disordered" evidence="3">
    <location>
        <begin position="178"/>
        <end position="213"/>
    </location>
</feature>
<feature type="region of interest" description="Disordered" evidence="3">
    <location>
        <begin position="322"/>
        <end position="349"/>
    </location>
</feature>
<feature type="region of interest" description="Disordered" evidence="3">
    <location>
        <begin position="576"/>
        <end position="597"/>
    </location>
</feature>
<feature type="compositionally biased region" description="Low complexity" evidence="3">
    <location>
        <begin position="8"/>
        <end position="18"/>
    </location>
</feature>
<feature type="compositionally biased region" description="Polar residues" evidence="3">
    <location>
        <begin position="19"/>
        <end position="30"/>
    </location>
</feature>
<feature type="compositionally biased region" description="Low complexity" evidence="3">
    <location>
        <begin position="56"/>
        <end position="93"/>
    </location>
</feature>
<feature type="compositionally biased region" description="Low complexity" evidence="3">
    <location>
        <begin position="178"/>
        <end position="188"/>
    </location>
</feature>
<feature type="compositionally biased region" description="Basic and acidic residues" evidence="3">
    <location>
        <begin position="200"/>
        <end position="212"/>
    </location>
</feature>
<feature type="compositionally biased region" description="Basic and acidic residues" evidence="3">
    <location>
        <begin position="585"/>
        <end position="597"/>
    </location>
</feature>
<gene>
    <name type="primary">xlnR</name>
    <name type="ORF">ATEG_02432</name>
</gene>
<protein>
    <recommendedName>
        <fullName>Xylanolytic transcriptional activator xlnR</fullName>
    </recommendedName>
    <alternativeName>
        <fullName>Xylanase regulator</fullName>
    </alternativeName>
</protein>
<name>XLNR_ASPTN</name>
<organism>
    <name type="scientific">Aspergillus terreus (strain NIH 2624 / FGSC A1156)</name>
    <dbReference type="NCBI Taxonomy" id="341663"/>
    <lineage>
        <taxon>Eukaryota</taxon>
        <taxon>Fungi</taxon>
        <taxon>Dikarya</taxon>
        <taxon>Ascomycota</taxon>
        <taxon>Pezizomycotina</taxon>
        <taxon>Eurotiomycetes</taxon>
        <taxon>Eurotiomycetidae</taxon>
        <taxon>Eurotiales</taxon>
        <taxon>Aspergillaceae</taxon>
        <taxon>Aspergillus</taxon>
        <taxon>Aspergillus subgen. Circumdati</taxon>
    </lineage>
</organism>